<sequence>MIGKPRGRRGVNLQILPSAMTVLSICAGLTAIKFALEHQPKAAMALIAAAAILDGLDGRVARILDAQSRMGAEIDSLADAVNFGVTPALVLYVSMLSKWPVGWVVVLLYAVCVVLRLARYNALQDDGTQPAYAHEFFVGMPAPAGAVSMIGLLALKMQFGEGWWTSVWFLSFWVTGTSILLVSGIPMKKMHAVSVPPNYAAALLAVLAICAAAAVLAPYLLIWVIIIAYMCHIPFAVRSQRWLAQHPEVWDDKPKQRRAVRRASRRAHPYRPSMARLGLRKPGRRL</sequence>
<reference key="1">
    <citation type="journal article" date="2003" name="Proc. Natl. Acad. Sci. U.S.A.">
        <title>The complete genome sequence of Mycobacterium bovis.</title>
        <authorList>
            <person name="Garnier T."/>
            <person name="Eiglmeier K."/>
            <person name="Camus J.-C."/>
            <person name="Medina N."/>
            <person name="Mansoor H."/>
            <person name="Pryor M."/>
            <person name="Duthoy S."/>
            <person name="Grondin S."/>
            <person name="Lacroix C."/>
            <person name="Monsempe C."/>
            <person name="Simon S."/>
            <person name="Harris B."/>
            <person name="Atkin R."/>
            <person name="Doggett J."/>
            <person name="Mayes R."/>
            <person name="Keating L."/>
            <person name="Wheeler P.R."/>
            <person name="Parkhill J."/>
            <person name="Barrell B.G."/>
            <person name="Cole S.T."/>
            <person name="Gordon S.V."/>
            <person name="Hewinson R.G."/>
        </authorList>
    </citation>
    <scope>NUCLEOTIDE SEQUENCE [LARGE SCALE GENOMIC DNA]</scope>
    <source>
        <strain>ATCC BAA-935 / AF2122/97</strain>
    </source>
</reference>
<reference key="2">
    <citation type="journal article" date="2017" name="Genome Announc.">
        <title>Updated reference genome sequence and annotation of Mycobacterium bovis AF2122/97.</title>
        <authorList>
            <person name="Malone K.M."/>
            <person name="Farrell D."/>
            <person name="Stuber T.P."/>
            <person name="Schubert O.T."/>
            <person name="Aebersold R."/>
            <person name="Robbe-Austerman S."/>
            <person name="Gordon S.V."/>
        </authorList>
    </citation>
    <scope>NUCLEOTIDE SEQUENCE [LARGE SCALE GENOMIC DNA]</scope>
    <scope>GENOME REANNOTATION</scope>
    <source>
        <strain>ATCC BAA-935 / AF2122/97</strain>
    </source>
</reference>
<evidence type="ECO:0000250" key="1"/>
<evidence type="ECO:0000255" key="2"/>
<evidence type="ECO:0000305" key="3"/>
<keyword id="KW-1003">Cell membrane</keyword>
<keyword id="KW-0444">Lipid biosynthesis</keyword>
<keyword id="KW-0443">Lipid metabolism</keyword>
<keyword id="KW-0472">Membrane</keyword>
<keyword id="KW-0594">Phospholipid biosynthesis</keyword>
<keyword id="KW-1208">Phospholipid metabolism</keyword>
<keyword id="KW-1185">Reference proteome</keyword>
<keyword id="KW-0808">Transferase</keyword>
<keyword id="KW-0812">Transmembrane</keyword>
<keyword id="KW-1133">Transmembrane helix</keyword>
<dbReference type="EC" id="2.7.8.8"/>
<dbReference type="EMBL" id="LT708304">
    <property type="protein sequence ID" value="SIT99030.1"/>
    <property type="molecule type" value="Genomic_DNA"/>
</dbReference>
<dbReference type="RefSeq" id="NP_854107.1">
    <property type="nucleotide sequence ID" value="NC_002945.3"/>
</dbReference>
<dbReference type="RefSeq" id="WP_003402213.1">
    <property type="nucleotide sequence ID" value="NC_002945.4"/>
</dbReference>
<dbReference type="SMR" id="P59949"/>
<dbReference type="GeneID" id="45424397"/>
<dbReference type="PATRIC" id="fig|233413.5.peg.484"/>
<dbReference type="Proteomes" id="UP000001419">
    <property type="component" value="Chromosome"/>
</dbReference>
<dbReference type="GO" id="GO:0005886">
    <property type="term" value="C:plasma membrane"/>
    <property type="evidence" value="ECO:0007669"/>
    <property type="project" value="UniProtKB-SubCell"/>
</dbReference>
<dbReference type="GO" id="GO:0003882">
    <property type="term" value="F:CDP-diacylglycerol-serine O-phosphatidyltransferase activity"/>
    <property type="evidence" value="ECO:0007669"/>
    <property type="project" value="UniProtKB-EC"/>
</dbReference>
<dbReference type="GO" id="GO:0008654">
    <property type="term" value="P:phospholipid biosynthetic process"/>
    <property type="evidence" value="ECO:0007669"/>
    <property type="project" value="UniProtKB-KW"/>
</dbReference>
<dbReference type="FunFam" id="1.20.120.1760:FF:000025">
    <property type="entry name" value="CDP-diacylglycerol--serine o-phosphatidyltransferase PssA"/>
    <property type="match status" value="1"/>
</dbReference>
<dbReference type="Gene3D" id="1.20.120.1760">
    <property type="match status" value="1"/>
</dbReference>
<dbReference type="InterPro" id="IPR050324">
    <property type="entry name" value="CDP-alcohol_PTase-I"/>
</dbReference>
<dbReference type="InterPro" id="IPR004533">
    <property type="entry name" value="CDP-diaglyc--ser_O-PTrfase"/>
</dbReference>
<dbReference type="InterPro" id="IPR000462">
    <property type="entry name" value="CDP-OH_P_trans"/>
</dbReference>
<dbReference type="InterPro" id="IPR043130">
    <property type="entry name" value="CDP-OH_PTrfase_TM_dom"/>
</dbReference>
<dbReference type="InterPro" id="IPR048254">
    <property type="entry name" value="CDP_ALCOHOL_P_TRANSF_CS"/>
</dbReference>
<dbReference type="NCBIfam" id="TIGR00473">
    <property type="entry name" value="pssA"/>
    <property type="match status" value="1"/>
</dbReference>
<dbReference type="PANTHER" id="PTHR14269">
    <property type="entry name" value="CDP-DIACYLGLYCEROL--GLYCEROL-3-PHOSPHATE 3-PHOSPHATIDYLTRANSFERASE-RELATED"/>
    <property type="match status" value="1"/>
</dbReference>
<dbReference type="PANTHER" id="PTHR14269:SF61">
    <property type="entry name" value="CDP-DIACYLGLYCEROL--SERINE O-PHOSPHATIDYLTRANSFERASE"/>
    <property type="match status" value="1"/>
</dbReference>
<dbReference type="Pfam" id="PF01066">
    <property type="entry name" value="CDP-OH_P_transf"/>
    <property type="match status" value="1"/>
</dbReference>
<dbReference type="PROSITE" id="PS00379">
    <property type="entry name" value="CDP_ALCOHOL_P_TRANSF"/>
    <property type="match status" value="1"/>
</dbReference>
<organism>
    <name type="scientific">Mycobacterium bovis (strain ATCC BAA-935 / AF2122/97)</name>
    <dbReference type="NCBI Taxonomy" id="233413"/>
    <lineage>
        <taxon>Bacteria</taxon>
        <taxon>Bacillati</taxon>
        <taxon>Actinomycetota</taxon>
        <taxon>Actinomycetes</taxon>
        <taxon>Mycobacteriales</taxon>
        <taxon>Mycobacteriaceae</taxon>
        <taxon>Mycobacterium</taxon>
        <taxon>Mycobacterium tuberculosis complex</taxon>
    </lineage>
</organism>
<feature type="chain" id="PRO_0000056796" description="CDP-diacylglycerol--serine O-phosphatidyltransferase">
    <location>
        <begin position="1"/>
        <end position="286"/>
    </location>
</feature>
<feature type="transmembrane region" description="Helical" evidence="2">
    <location>
        <begin position="15"/>
        <end position="35"/>
    </location>
</feature>
<feature type="transmembrane region" description="Helical" evidence="2">
    <location>
        <begin position="95"/>
        <end position="115"/>
    </location>
</feature>
<feature type="transmembrane region" description="Helical" evidence="2">
    <location>
        <begin position="135"/>
        <end position="155"/>
    </location>
</feature>
<feature type="transmembrane region" description="Helical" evidence="2">
    <location>
        <begin position="167"/>
        <end position="187"/>
    </location>
</feature>
<feature type="transmembrane region" description="Helical" evidence="2">
    <location>
        <begin position="207"/>
        <end position="227"/>
    </location>
</feature>
<proteinExistence type="inferred from homology"/>
<accession>P59949</accession>
<accession>A0A1R3XVB9</accession>
<accession>X2BEX8</accession>
<name>PSS_MYCBO</name>
<comment type="catalytic activity">
    <reaction>
        <text>a CDP-1,2-diacyl-sn-glycerol + L-serine = a 1,2-diacyl-sn-glycero-3-phospho-L-serine + CMP + H(+)</text>
        <dbReference type="Rhea" id="RHEA:16913"/>
        <dbReference type="ChEBI" id="CHEBI:15378"/>
        <dbReference type="ChEBI" id="CHEBI:33384"/>
        <dbReference type="ChEBI" id="CHEBI:57262"/>
        <dbReference type="ChEBI" id="CHEBI:58332"/>
        <dbReference type="ChEBI" id="CHEBI:60377"/>
        <dbReference type="EC" id="2.7.8.8"/>
    </reaction>
</comment>
<comment type="subcellular location">
    <subcellularLocation>
        <location evidence="1">Cell membrane</location>
        <topology evidence="1">Multi-pass membrane protein</topology>
    </subcellularLocation>
</comment>
<comment type="similarity">
    <text evidence="3">Belongs to the CDP-alcohol phosphatidyltransferase class-I family.</text>
</comment>
<gene>
    <name type="primary">pssA</name>
    <name type="ordered locus">BQ2027_MB0444C</name>
</gene>
<protein>
    <recommendedName>
        <fullName>CDP-diacylglycerol--serine O-phosphatidyltransferase</fullName>
        <ecNumber>2.7.8.8</ecNumber>
    </recommendedName>
    <alternativeName>
        <fullName>Phosphatidylserine synthase</fullName>
    </alternativeName>
</protein>